<reference key="1">
    <citation type="journal article" date="1999" name="Virology">
        <title>Isolation and characterization of APSE-1, a bacteriophage infecting the secondary endosymbiont of acyrthosiphon pisum.</title>
        <authorList>
            <person name="van der Wilk F."/>
            <person name="Dullemans A.M."/>
            <person name="Verbeek M."/>
            <person name="van den Heuvel J.F.J.M."/>
        </authorList>
    </citation>
    <scope>NUCLEOTIDE SEQUENCE [LARGE SCALE GENOMIC DNA]</scope>
</reference>
<protein>
    <recommendedName>
        <fullName>Peptidoglycan hydrolase gp27</fullName>
    </recommendedName>
    <alternativeName>
        <fullName>Gene product 27</fullName>
        <shortName>Gp27</shortName>
    </alternativeName>
    <alternativeName>
        <fullName>Internal virion protein gp27</fullName>
    </alternativeName>
</protein>
<comment type="function">
    <text evidence="1">Component of the cylindrical core that assembles on the inner surface of the capsid during procapsid formation. Required for stabilization of the condensed DNA within the capsid; perhaps by plugging the hole through which the DNA enters. Plays a role in ejection of the bacteriophage DNA into the host cell at the initiation of infection. Functions as an exolysin that catalyzes the cleavage of the glycosidic bonds between N-acetylmuramic acid and N-acetylglucosamine residues in peptidoglycans.</text>
</comment>
<comment type="subcellular location">
    <subcellularLocation>
        <location evidence="1">Virion</location>
    </subcellularLocation>
</comment>
<comment type="similarity">
    <text evidence="2">To phage P22 gp4.</text>
</comment>
<accession>Q9T1S1</accession>
<gene>
    <name type="primary">27</name>
</gene>
<organism>
    <name type="scientific">Acyrthosiphon pisum secondary endosymbiont phage 1</name>
    <name type="common">Bacteriophage APSE-1</name>
    <dbReference type="NCBI Taxonomy" id="2682836"/>
    <lineage>
        <taxon>Viruses</taxon>
        <taxon>Duplodnaviria</taxon>
        <taxon>Heunggongvirae</taxon>
        <taxon>Uroviricota</taxon>
        <taxon>Caudoviricetes</taxon>
        <taxon>Sendosyvirus</taxon>
        <taxon>Sendosyvirus APSE1</taxon>
    </lineage>
</organism>
<keyword id="KW-1235">Degradation of host cell envelope components during virus entry</keyword>
<keyword id="KW-1236">Degradation of host peptidoglycans during virus entry</keyword>
<keyword id="KW-0378">Hydrolase</keyword>
<keyword id="KW-0426">Late protein</keyword>
<keyword id="KW-1185">Reference proteome</keyword>
<keyword id="KW-1171">Viral genome ejection through host cell envelope</keyword>
<keyword id="KW-1162">Viral penetration into host cytoplasm</keyword>
<keyword id="KW-1244">Viral short tail ejection system</keyword>
<keyword id="KW-0946">Virion</keyword>
<keyword id="KW-1160">Virus entry into host cell</keyword>
<proteinExistence type="inferred from homology"/>
<evidence type="ECO:0000250" key="1">
    <source>
        <dbReference type="UniProtKB" id="P26746"/>
    </source>
</evidence>
<evidence type="ECO:0000305" key="2"/>
<name>EXLYS_BPAPS</name>
<feature type="chain" id="PRO_0000077751" description="Peptidoglycan hydrolase gp27">
    <location>
        <begin position="1"/>
        <end position="160"/>
    </location>
</feature>
<organismHost>
    <name type="scientific">Escherichia coli</name>
    <dbReference type="NCBI Taxonomy" id="562"/>
</organismHost>
<sequence length="160" mass="17449">MTKPLTKGEIVLFALRKAGIASEATNIDVEPQSFEEGINDLEDLMAELQITFGDLGYQFSAEEENPTSDDASGLPRKYKQVMGYQLMLRMLSDYGIEPTPRQEASAAAAYDALLTDTLSVPSIARRGDMPVGQGNNYTALGTASYYVERGFHAKNTDPVS</sequence>
<dbReference type="EMBL" id="AF157835">
    <property type="protein sequence ID" value="AAF03970.1"/>
    <property type="molecule type" value="Genomic_DNA"/>
</dbReference>
<dbReference type="RefSeq" id="NP_050988.1">
    <property type="nucleotide sequence ID" value="NC_000935.1"/>
</dbReference>
<dbReference type="SMR" id="Q9T1S1"/>
<dbReference type="KEGG" id="vg:1262321"/>
<dbReference type="Proteomes" id="UP000000853">
    <property type="component" value="Genome"/>
</dbReference>
<dbReference type="GO" id="GO:0044423">
    <property type="term" value="C:virion component"/>
    <property type="evidence" value="ECO:0007669"/>
    <property type="project" value="UniProtKB-KW"/>
</dbReference>
<dbReference type="GO" id="GO:0016787">
    <property type="term" value="F:hydrolase activity"/>
    <property type="evidence" value="ECO:0007669"/>
    <property type="project" value="UniProtKB-KW"/>
</dbReference>
<dbReference type="GO" id="GO:0098994">
    <property type="term" value="P:symbiont entry into host cell via disruption of host cell envelope"/>
    <property type="evidence" value="ECO:0007669"/>
    <property type="project" value="UniProtKB-KW"/>
</dbReference>
<dbReference type="GO" id="GO:0098932">
    <property type="term" value="P:symbiont entry into host cell via disruption of host cell wall peptidoglycan"/>
    <property type="evidence" value="ECO:0007669"/>
    <property type="project" value="UniProtKB-KW"/>
</dbReference>
<dbReference type="GO" id="GO:0099002">
    <property type="term" value="P:symbiont genome ejection through host cell envelope, short tail mechanism"/>
    <property type="evidence" value="ECO:0007669"/>
    <property type="project" value="UniProtKB-KW"/>
</dbReference>
<dbReference type="Gene3D" id="1.10.3230.20">
    <property type="entry name" value="P22 tail accessory factor (Gp4)"/>
    <property type="match status" value="1"/>
</dbReference>
<dbReference type="InterPro" id="IPR038258">
    <property type="entry name" value="Gp4_sf"/>
</dbReference>
<dbReference type="InterPro" id="IPR020362">
    <property type="entry name" value="Tail_accessory_Gp4"/>
</dbReference>
<dbReference type="Pfam" id="PF11650">
    <property type="entry name" value="P22_Tail-4"/>
    <property type="match status" value="1"/>
</dbReference>